<evidence type="ECO:0000255" key="1">
    <source>
        <dbReference type="HAMAP-Rule" id="MF_00211"/>
    </source>
</evidence>
<name>TRPD_RHIME</name>
<dbReference type="EC" id="2.4.2.18" evidence="1"/>
<dbReference type="EMBL" id="AL591688">
    <property type="protein sequence ID" value="CAC46239.1"/>
    <property type="molecule type" value="Genomic_DNA"/>
</dbReference>
<dbReference type="RefSeq" id="NP_385766.1">
    <property type="nucleotide sequence ID" value="NC_003047.1"/>
</dbReference>
<dbReference type="RefSeq" id="WP_003533254.1">
    <property type="nucleotide sequence ID" value="NC_003047.1"/>
</dbReference>
<dbReference type="SMR" id="Q92PS0"/>
<dbReference type="EnsemblBacteria" id="CAC46239">
    <property type="protein sequence ID" value="CAC46239"/>
    <property type="gene ID" value="SMc00235"/>
</dbReference>
<dbReference type="KEGG" id="sme:SMc00235"/>
<dbReference type="PATRIC" id="fig|266834.11.peg.3093"/>
<dbReference type="eggNOG" id="COG0547">
    <property type="taxonomic scope" value="Bacteria"/>
</dbReference>
<dbReference type="HOGENOM" id="CLU_034315_2_1_5"/>
<dbReference type="OrthoDB" id="9806430at2"/>
<dbReference type="UniPathway" id="UPA00035">
    <property type="reaction ID" value="UER00041"/>
</dbReference>
<dbReference type="Proteomes" id="UP000001976">
    <property type="component" value="Chromosome"/>
</dbReference>
<dbReference type="GO" id="GO:0005829">
    <property type="term" value="C:cytosol"/>
    <property type="evidence" value="ECO:0007669"/>
    <property type="project" value="TreeGrafter"/>
</dbReference>
<dbReference type="GO" id="GO:0004048">
    <property type="term" value="F:anthranilate phosphoribosyltransferase activity"/>
    <property type="evidence" value="ECO:0007669"/>
    <property type="project" value="UniProtKB-UniRule"/>
</dbReference>
<dbReference type="GO" id="GO:0000287">
    <property type="term" value="F:magnesium ion binding"/>
    <property type="evidence" value="ECO:0007669"/>
    <property type="project" value="UniProtKB-UniRule"/>
</dbReference>
<dbReference type="GO" id="GO:0000162">
    <property type="term" value="P:L-tryptophan biosynthetic process"/>
    <property type="evidence" value="ECO:0007669"/>
    <property type="project" value="UniProtKB-UniRule"/>
</dbReference>
<dbReference type="FunFam" id="3.40.1030.10:FF:000002">
    <property type="entry name" value="Anthranilate phosphoribosyltransferase"/>
    <property type="match status" value="1"/>
</dbReference>
<dbReference type="Gene3D" id="3.40.1030.10">
    <property type="entry name" value="Nucleoside phosphorylase/phosphoribosyltransferase catalytic domain"/>
    <property type="match status" value="1"/>
</dbReference>
<dbReference type="Gene3D" id="1.20.970.10">
    <property type="entry name" value="Transferase, Pyrimidine Nucleoside Phosphorylase, Chain C"/>
    <property type="match status" value="1"/>
</dbReference>
<dbReference type="HAMAP" id="MF_00211">
    <property type="entry name" value="TrpD"/>
    <property type="match status" value="1"/>
</dbReference>
<dbReference type="InterPro" id="IPR005940">
    <property type="entry name" value="Anthranilate_Pribosyl_Tfrase"/>
</dbReference>
<dbReference type="InterPro" id="IPR000312">
    <property type="entry name" value="Glycosyl_Trfase_fam3"/>
</dbReference>
<dbReference type="InterPro" id="IPR017459">
    <property type="entry name" value="Glycosyl_Trfase_fam3_N_dom"/>
</dbReference>
<dbReference type="InterPro" id="IPR036320">
    <property type="entry name" value="Glycosyl_Trfase_fam3_N_dom_sf"/>
</dbReference>
<dbReference type="InterPro" id="IPR035902">
    <property type="entry name" value="Nuc_phospho_transferase"/>
</dbReference>
<dbReference type="NCBIfam" id="TIGR01245">
    <property type="entry name" value="trpD"/>
    <property type="match status" value="1"/>
</dbReference>
<dbReference type="PANTHER" id="PTHR43285">
    <property type="entry name" value="ANTHRANILATE PHOSPHORIBOSYLTRANSFERASE"/>
    <property type="match status" value="1"/>
</dbReference>
<dbReference type="PANTHER" id="PTHR43285:SF2">
    <property type="entry name" value="ANTHRANILATE PHOSPHORIBOSYLTRANSFERASE"/>
    <property type="match status" value="1"/>
</dbReference>
<dbReference type="Pfam" id="PF02885">
    <property type="entry name" value="Glycos_trans_3N"/>
    <property type="match status" value="1"/>
</dbReference>
<dbReference type="Pfam" id="PF00591">
    <property type="entry name" value="Glycos_transf_3"/>
    <property type="match status" value="1"/>
</dbReference>
<dbReference type="SUPFAM" id="SSF52418">
    <property type="entry name" value="Nucleoside phosphorylase/phosphoribosyltransferase catalytic domain"/>
    <property type="match status" value="1"/>
</dbReference>
<dbReference type="SUPFAM" id="SSF47648">
    <property type="entry name" value="Nucleoside phosphorylase/phosphoribosyltransferase N-terminal domain"/>
    <property type="match status" value="1"/>
</dbReference>
<proteinExistence type="inferred from homology"/>
<protein>
    <recommendedName>
        <fullName evidence="1">Anthranilate phosphoribosyltransferase</fullName>
        <ecNumber evidence="1">2.4.2.18</ecNumber>
    </recommendedName>
</protein>
<keyword id="KW-0028">Amino-acid biosynthesis</keyword>
<keyword id="KW-0057">Aromatic amino acid biosynthesis</keyword>
<keyword id="KW-0328">Glycosyltransferase</keyword>
<keyword id="KW-0460">Magnesium</keyword>
<keyword id="KW-0479">Metal-binding</keyword>
<keyword id="KW-1185">Reference proteome</keyword>
<keyword id="KW-0808">Transferase</keyword>
<keyword id="KW-0822">Tryptophan biosynthesis</keyword>
<feature type="chain" id="PRO_0000154475" description="Anthranilate phosphoribosyltransferase">
    <location>
        <begin position="1"/>
        <end position="337"/>
    </location>
</feature>
<feature type="binding site" evidence="1">
    <location>
        <position position="81"/>
    </location>
    <ligand>
        <name>5-phospho-alpha-D-ribose 1-diphosphate</name>
        <dbReference type="ChEBI" id="CHEBI:58017"/>
    </ligand>
</feature>
<feature type="binding site" evidence="1">
    <location>
        <position position="81"/>
    </location>
    <ligand>
        <name>anthranilate</name>
        <dbReference type="ChEBI" id="CHEBI:16567"/>
        <label>1</label>
    </ligand>
</feature>
<feature type="binding site" evidence="1">
    <location>
        <begin position="84"/>
        <end position="85"/>
    </location>
    <ligand>
        <name>5-phospho-alpha-D-ribose 1-diphosphate</name>
        <dbReference type="ChEBI" id="CHEBI:58017"/>
    </ligand>
</feature>
<feature type="binding site" evidence="1">
    <location>
        <position position="89"/>
    </location>
    <ligand>
        <name>5-phospho-alpha-D-ribose 1-diphosphate</name>
        <dbReference type="ChEBI" id="CHEBI:58017"/>
    </ligand>
</feature>
<feature type="binding site" evidence="1">
    <location>
        <begin position="91"/>
        <end position="94"/>
    </location>
    <ligand>
        <name>5-phospho-alpha-D-ribose 1-diphosphate</name>
        <dbReference type="ChEBI" id="CHEBI:58017"/>
    </ligand>
</feature>
<feature type="binding site" evidence="1">
    <location>
        <position position="93"/>
    </location>
    <ligand>
        <name>Mg(2+)</name>
        <dbReference type="ChEBI" id="CHEBI:18420"/>
        <label>1</label>
    </ligand>
</feature>
<feature type="binding site" evidence="1">
    <location>
        <begin position="109"/>
        <end position="117"/>
    </location>
    <ligand>
        <name>5-phospho-alpha-D-ribose 1-diphosphate</name>
        <dbReference type="ChEBI" id="CHEBI:58017"/>
    </ligand>
</feature>
<feature type="binding site" evidence="1">
    <location>
        <position position="112"/>
    </location>
    <ligand>
        <name>anthranilate</name>
        <dbReference type="ChEBI" id="CHEBI:16567"/>
        <label>1</label>
    </ligand>
</feature>
<feature type="binding site" evidence="1">
    <location>
        <position position="121"/>
    </location>
    <ligand>
        <name>5-phospho-alpha-D-ribose 1-diphosphate</name>
        <dbReference type="ChEBI" id="CHEBI:58017"/>
    </ligand>
</feature>
<feature type="binding site" evidence="1">
    <location>
        <position position="167"/>
    </location>
    <ligand>
        <name>anthranilate</name>
        <dbReference type="ChEBI" id="CHEBI:16567"/>
        <label>2</label>
    </ligand>
</feature>
<feature type="binding site" evidence="1">
    <location>
        <position position="225"/>
    </location>
    <ligand>
        <name>Mg(2+)</name>
        <dbReference type="ChEBI" id="CHEBI:18420"/>
        <label>2</label>
    </ligand>
</feature>
<feature type="binding site" evidence="1">
    <location>
        <position position="226"/>
    </location>
    <ligand>
        <name>Mg(2+)</name>
        <dbReference type="ChEBI" id="CHEBI:18420"/>
        <label>1</label>
    </ligand>
</feature>
<feature type="binding site" evidence="1">
    <location>
        <position position="226"/>
    </location>
    <ligand>
        <name>Mg(2+)</name>
        <dbReference type="ChEBI" id="CHEBI:18420"/>
        <label>2</label>
    </ligand>
</feature>
<sequence length="337" mass="34426">MSDLKPFVAKVAAREALSREDARAAFEIIMSGAATPSQIGGFLMALRVRGETVDEIVGAVGAMRARMLPVEAPDGAIDIVGTGGDGAGTYNISTLAALIVAGAGVPVAKHGNRALSSKSGTADALSCLGVNLDIGPAVISRCIAEAGLGFMFAQQHHSAMRHVGPTRVELGTRTIFNLLGPLANPAGVRQQLVGVYAPQWVDPLAEVLRDLGSESVWVVHGEGLDEITTTGVTKVAALKDGTITNFELTPADFGLERVSLDALKGGDGAHNAAALQAVLDGAENAYRDISLANAAASLMIAGRAGDLSEGMALARQSLSSGGAKVALQRLITVSNAA</sequence>
<organism>
    <name type="scientific">Rhizobium meliloti (strain 1021)</name>
    <name type="common">Ensifer meliloti</name>
    <name type="synonym">Sinorhizobium meliloti</name>
    <dbReference type="NCBI Taxonomy" id="266834"/>
    <lineage>
        <taxon>Bacteria</taxon>
        <taxon>Pseudomonadati</taxon>
        <taxon>Pseudomonadota</taxon>
        <taxon>Alphaproteobacteria</taxon>
        <taxon>Hyphomicrobiales</taxon>
        <taxon>Rhizobiaceae</taxon>
        <taxon>Sinorhizobium/Ensifer group</taxon>
        <taxon>Sinorhizobium</taxon>
    </lineage>
</organism>
<accession>Q92PS0</accession>
<gene>
    <name evidence="1" type="primary">trpD</name>
    <name type="ordered locus">R01660</name>
    <name type="ORF">SMc00235</name>
</gene>
<reference key="1">
    <citation type="journal article" date="2001" name="Proc. Natl. Acad. Sci. U.S.A.">
        <title>Analysis of the chromosome sequence of the legume symbiont Sinorhizobium meliloti strain 1021.</title>
        <authorList>
            <person name="Capela D."/>
            <person name="Barloy-Hubler F."/>
            <person name="Gouzy J."/>
            <person name="Bothe G."/>
            <person name="Ampe F."/>
            <person name="Batut J."/>
            <person name="Boistard P."/>
            <person name="Becker A."/>
            <person name="Boutry M."/>
            <person name="Cadieu E."/>
            <person name="Dreano S."/>
            <person name="Gloux S."/>
            <person name="Godrie T."/>
            <person name="Goffeau A."/>
            <person name="Kahn D."/>
            <person name="Kiss E."/>
            <person name="Lelaure V."/>
            <person name="Masuy D."/>
            <person name="Pohl T."/>
            <person name="Portetelle D."/>
            <person name="Puehler A."/>
            <person name="Purnelle B."/>
            <person name="Ramsperger U."/>
            <person name="Renard C."/>
            <person name="Thebault P."/>
            <person name="Vandenbol M."/>
            <person name="Weidner S."/>
            <person name="Galibert F."/>
        </authorList>
    </citation>
    <scope>NUCLEOTIDE SEQUENCE [LARGE SCALE GENOMIC DNA]</scope>
    <source>
        <strain>1021</strain>
    </source>
</reference>
<reference key="2">
    <citation type="journal article" date="2001" name="Science">
        <title>The composite genome of the legume symbiont Sinorhizobium meliloti.</title>
        <authorList>
            <person name="Galibert F."/>
            <person name="Finan T.M."/>
            <person name="Long S.R."/>
            <person name="Puehler A."/>
            <person name="Abola P."/>
            <person name="Ampe F."/>
            <person name="Barloy-Hubler F."/>
            <person name="Barnett M.J."/>
            <person name="Becker A."/>
            <person name="Boistard P."/>
            <person name="Bothe G."/>
            <person name="Boutry M."/>
            <person name="Bowser L."/>
            <person name="Buhrmester J."/>
            <person name="Cadieu E."/>
            <person name="Capela D."/>
            <person name="Chain P."/>
            <person name="Cowie A."/>
            <person name="Davis R.W."/>
            <person name="Dreano S."/>
            <person name="Federspiel N.A."/>
            <person name="Fisher R.F."/>
            <person name="Gloux S."/>
            <person name="Godrie T."/>
            <person name="Goffeau A."/>
            <person name="Golding B."/>
            <person name="Gouzy J."/>
            <person name="Gurjal M."/>
            <person name="Hernandez-Lucas I."/>
            <person name="Hong A."/>
            <person name="Huizar L."/>
            <person name="Hyman R.W."/>
            <person name="Jones T."/>
            <person name="Kahn D."/>
            <person name="Kahn M.L."/>
            <person name="Kalman S."/>
            <person name="Keating D.H."/>
            <person name="Kiss E."/>
            <person name="Komp C."/>
            <person name="Lelaure V."/>
            <person name="Masuy D."/>
            <person name="Palm C."/>
            <person name="Peck M.C."/>
            <person name="Pohl T.M."/>
            <person name="Portetelle D."/>
            <person name="Purnelle B."/>
            <person name="Ramsperger U."/>
            <person name="Surzycki R."/>
            <person name="Thebault P."/>
            <person name="Vandenbol M."/>
            <person name="Vorhoelter F.J."/>
            <person name="Weidner S."/>
            <person name="Wells D.H."/>
            <person name="Wong K."/>
            <person name="Yeh K.-C."/>
            <person name="Batut J."/>
        </authorList>
    </citation>
    <scope>NUCLEOTIDE SEQUENCE [LARGE SCALE GENOMIC DNA]</scope>
    <source>
        <strain>1021</strain>
    </source>
</reference>
<comment type="function">
    <text evidence="1">Catalyzes the transfer of the phosphoribosyl group of 5-phosphorylribose-1-pyrophosphate (PRPP) to anthranilate to yield N-(5'-phosphoribosyl)-anthranilate (PRA).</text>
</comment>
<comment type="catalytic activity">
    <reaction evidence="1">
        <text>N-(5-phospho-beta-D-ribosyl)anthranilate + diphosphate = 5-phospho-alpha-D-ribose 1-diphosphate + anthranilate</text>
        <dbReference type="Rhea" id="RHEA:11768"/>
        <dbReference type="ChEBI" id="CHEBI:16567"/>
        <dbReference type="ChEBI" id="CHEBI:18277"/>
        <dbReference type="ChEBI" id="CHEBI:33019"/>
        <dbReference type="ChEBI" id="CHEBI:58017"/>
        <dbReference type="EC" id="2.4.2.18"/>
    </reaction>
</comment>
<comment type="cofactor">
    <cofactor evidence="1">
        <name>Mg(2+)</name>
        <dbReference type="ChEBI" id="CHEBI:18420"/>
    </cofactor>
    <text evidence="1">Binds 2 magnesium ions per monomer.</text>
</comment>
<comment type="pathway">
    <text evidence="1">Amino-acid biosynthesis; L-tryptophan biosynthesis; L-tryptophan from chorismate: step 2/5.</text>
</comment>
<comment type="subunit">
    <text evidence="1">Homodimer.</text>
</comment>
<comment type="similarity">
    <text evidence="1">Belongs to the anthranilate phosphoribosyltransferase family.</text>
</comment>